<comment type="subcellular location">
    <subcellularLocation>
        <location evidence="2">Host membrane</location>
        <topology evidence="2">Multi-pass membrane protein</topology>
    </subcellularLocation>
</comment>
<feature type="chain" id="PRO_0000385439" description="Putative transmembrane protein 49">
    <location>
        <begin position="1"/>
        <end position="140"/>
    </location>
</feature>
<feature type="transmembrane region" description="Helical" evidence="1">
    <location>
        <begin position="23"/>
        <end position="43"/>
    </location>
</feature>
<feature type="transmembrane region" description="Helical" evidence="1">
    <location>
        <begin position="93"/>
        <end position="110"/>
    </location>
</feature>
<organismHost>
    <name type="scientific">Saccharolobus islandicus</name>
    <name type="common">Sulfolobus islandicus</name>
    <dbReference type="NCBI Taxonomy" id="43080"/>
</organismHost>
<proteinExistence type="predicted"/>
<accession>Q914I3</accession>
<protein>
    <recommendedName>
        <fullName>Putative transmembrane protein 49</fullName>
    </recommendedName>
</protein>
<reference key="1">
    <citation type="journal article" date="2000" name="Virology">
        <title>A novel lipothrixvirus, SIFV, of the extremely thermophilic crenarchaeon Sulfolobus.</title>
        <authorList>
            <person name="Arnold H.P."/>
            <person name="Zillig W."/>
            <person name="Ziese U."/>
            <person name="Holz I."/>
            <person name="Crosby M."/>
            <person name="Utterback T."/>
            <person name="Weidmann J.F."/>
            <person name="Umayam L.A."/>
            <person name="Teffera K."/>
            <person name="Kristjanson J.K."/>
            <person name="Klenk H.P."/>
            <person name="Nelson K.E."/>
            <person name="Fraser C.M."/>
        </authorList>
    </citation>
    <scope>NUCLEOTIDE SEQUENCE [GENOMIC DNA]</scope>
</reference>
<dbReference type="EMBL" id="AF440571">
    <property type="protein sequence ID" value="AAL27758.1"/>
    <property type="molecule type" value="Genomic_DNA"/>
</dbReference>
<dbReference type="RefSeq" id="NP_445712.1">
    <property type="nucleotide sequence ID" value="NC_003214.2"/>
</dbReference>
<dbReference type="GeneID" id="922341"/>
<dbReference type="KEGG" id="vg:922341"/>
<dbReference type="Proteomes" id="UP000007017">
    <property type="component" value="Segment"/>
</dbReference>
<dbReference type="GO" id="GO:0033644">
    <property type="term" value="C:host cell membrane"/>
    <property type="evidence" value="ECO:0007669"/>
    <property type="project" value="UniProtKB-SubCell"/>
</dbReference>
<dbReference type="GO" id="GO:0016020">
    <property type="term" value="C:membrane"/>
    <property type="evidence" value="ECO:0007669"/>
    <property type="project" value="UniProtKB-KW"/>
</dbReference>
<keyword id="KW-1043">Host membrane</keyword>
<keyword id="KW-0472">Membrane</keyword>
<keyword id="KW-1185">Reference proteome</keyword>
<keyword id="KW-0812">Transmembrane</keyword>
<keyword id="KW-1133">Transmembrane helix</keyword>
<name>Y049_SIFVH</name>
<gene>
    <name type="primary">SIFV0049</name>
</gene>
<evidence type="ECO:0000255" key="1"/>
<evidence type="ECO:0000305" key="2"/>
<organism>
    <name type="scientific">Sulfolobus islandicus filamentous virus (isolate Iceland/Hveragerdi)</name>
    <name type="common">SIFV</name>
    <dbReference type="NCBI Taxonomy" id="654908"/>
    <lineage>
        <taxon>Viruses</taxon>
        <taxon>Adnaviria</taxon>
        <taxon>Zilligvirae</taxon>
        <taxon>Taleaviricota</taxon>
        <taxon>Tokiviricetes</taxon>
        <taxon>Ligamenvirales</taxon>
        <taxon>Lipothrixviridae</taxon>
        <taxon>Betalipothrixvirus</taxon>
        <taxon>Sulfolobus islandicus filamentous virus</taxon>
    </lineage>
</organism>
<sequence>MVRALLFHVITYTKFIVPVVKLLIMSAIAGVIAGAFGGGIGGVGDAIGTIIGDLERAIARFGGSIVNAFKTVIDKILTLAVRIGRIIEKYFRIAVHYIVLFLRLAYRYMYSFYTEFQKDPWRSLQFVGSMAILLNNSLFP</sequence>